<keyword id="KW-1003">Cell membrane</keyword>
<keyword id="KW-1015">Disulfide bond</keyword>
<keyword id="KW-0350">Heme biosynthesis</keyword>
<keyword id="KW-0408">Iron</keyword>
<keyword id="KW-0472">Membrane</keyword>
<keyword id="KW-0479">Metal-binding</keyword>
<keyword id="KW-0560">Oxidoreductase</keyword>
<keyword id="KW-1185">Reference proteome</keyword>
<keyword id="KW-0812">Transmembrane</keyword>
<keyword id="KW-1133">Transmembrane helix</keyword>
<name>CTAA_MACCJ</name>
<reference key="1">
    <citation type="journal article" date="2009" name="J. Bacteriol.">
        <title>Complete genome sequence of Macrococcus caseolyticus strain JCSCS5402, reflecting the ancestral genome of the human-pathogenic staphylococci.</title>
        <authorList>
            <person name="Baba T."/>
            <person name="Kuwahara-Arai K."/>
            <person name="Uchiyama I."/>
            <person name="Takeuchi F."/>
            <person name="Ito T."/>
            <person name="Hiramatsu K."/>
        </authorList>
    </citation>
    <scope>NUCLEOTIDE SEQUENCE [LARGE SCALE GENOMIC DNA]</scope>
    <source>
        <strain>JCSC5402</strain>
    </source>
</reference>
<protein>
    <recommendedName>
        <fullName evidence="1">Heme A synthase</fullName>
        <shortName evidence="1">HAS</shortName>
        <ecNumber evidence="1">1.17.99.9</ecNumber>
    </recommendedName>
    <alternativeName>
        <fullName evidence="1">Cytochrome aa3-controlling protein</fullName>
    </alternativeName>
</protein>
<comment type="function">
    <text evidence="1">Catalyzes the conversion of heme O to heme A by two successive hydroxylations of the methyl group at C8. The first hydroxylation forms heme I, the second hydroxylation results in an unstable dihydroxymethyl group, which spontaneously dehydrates, resulting in the formyl group of heme A.</text>
</comment>
<comment type="catalytic activity">
    <reaction evidence="1">
        <text>Fe(II)-heme o + 2 A + H2O = Fe(II)-heme a + 2 AH2</text>
        <dbReference type="Rhea" id="RHEA:63388"/>
        <dbReference type="ChEBI" id="CHEBI:13193"/>
        <dbReference type="ChEBI" id="CHEBI:15377"/>
        <dbReference type="ChEBI" id="CHEBI:17499"/>
        <dbReference type="ChEBI" id="CHEBI:60530"/>
        <dbReference type="ChEBI" id="CHEBI:61715"/>
        <dbReference type="EC" id="1.17.99.9"/>
    </reaction>
    <physiologicalReaction direction="left-to-right" evidence="1">
        <dbReference type="Rhea" id="RHEA:63389"/>
    </physiologicalReaction>
</comment>
<comment type="cofactor">
    <cofactor evidence="1">
        <name>heme b</name>
        <dbReference type="ChEBI" id="CHEBI:60344"/>
    </cofactor>
</comment>
<comment type="pathway">
    <text evidence="1">Porphyrin-containing compound metabolism; heme A biosynthesis; heme A from heme O: step 1/1.</text>
</comment>
<comment type="subunit">
    <text evidence="1">Interacts with CtaB.</text>
</comment>
<comment type="subcellular location">
    <subcellularLocation>
        <location evidence="1">Cell membrane</location>
        <topology evidence="1">Multi-pass membrane protein</topology>
    </subcellularLocation>
</comment>
<comment type="domain">
    <text evidence="1">The N-half (TM1-TM4) and C-half (TM5-TM8) domains are connected by an intracellular loop. Each domain is formed from four-helix bundles and they align in a pseudo twofold symmetry manner. The N-half domain is the substrate-heme O binding domain and the C-half domain is the cofactor heme B binding domain.</text>
</comment>
<comment type="domain">
    <text evidence="1">The cysteines of disulfide bond Cys-37 and Cys-44 may be involved in transfer of reducing equivalents from quinol in the membrane to the active site of the enzyme.</text>
</comment>
<comment type="similarity">
    <text evidence="1">Belongs to the COX15/CtaA family. Type 1 subfamily.</text>
</comment>
<evidence type="ECO:0000255" key="1">
    <source>
        <dbReference type="HAMAP-Rule" id="MF_01664"/>
    </source>
</evidence>
<feature type="chain" id="PRO_1000187243" description="Heme A synthase">
    <location>
        <begin position="1"/>
        <end position="300"/>
    </location>
</feature>
<feature type="topological domain" description="Cytoplasmic" evidence="1">
    <location>
        <begin position="1"/>
        <end position="8"/>
    </location>
</feature>
<feature type="transmembrane region" description="Helical" evidence="1">
    <location>
        <begin position="9"/>
        <end position="29"/>
    </location>
</feature>
<feature type="topological domain" description="Extracellular" evidence="1">
    <location>
        <begin position="30"/>
        <end position="64"/>
    </location>
</feature>
<feature type="transmembrane region" description="Helical" evidence="1">
    <location>
        <begin position="65"/>
        <end position="85"/>
    </location>
</feature>
<feature type="topological domain" description="Cytoplasmic" evidence="1">
    <location>
        <begin position="86"/>
        <end position="92"/>
    </location>
</feature>
<feature type="transmembrane region" description="Helical" evidence="1">
    <location>
        <begin position="93"/>
        <end position="113"/>
    </location>
</feature>
<feature type="topological domain" description="Extracellular" evidence="1">
    <location>
        <begin position="114"/>
        <end position="123"/>
    </location>
</feature>
<feature type="transmembrane region" description="Helical" evidence="1">
    <location>
        <begin position="124"/>
        <end position="144"/>
    </location>
</feature>
<feature type="topological domain" description="Cytoplasmic" evidence="1">
    <location>
        <begin position="145"/>
        <end position="163"/>
    </location>
</feature>
<feature type="transmembrane region" description="Helical" evidence="1">
    <location>
        <begin position="164"/>
        <end position="184"/>
    </location>
</feature>
<feature type="topological domain" description="Extracellular" evidence="1">
    <location>
        <begin position="185"/>
        <end position="218"/>
    </location>
</feature>
<feature type="transmembrane region" description="Helical" evidence="1">
    <location>
        <begin position="219"/>
        <end position="239"/>
    </location>
</feature>
<feature type="topological domain" description="Cytoplasmic" evidence="1">
    <location>
        <begin position="240"/>
        <end position="249"/>
    </location>
</feature>
<feature type="transmembrane region" description="Helical" evidence="1">
    <location>
        <begin position="250"/>
        <end position="270"/>
    </location>
</feature>
<feature type="topological domain" description="Extracellular" evidence="1">
    <location>
        <begin position="271"/>
        <end position="275"/>
    </location>
</feature>
<feature type="transmembrane region" description="Helical" evidence="1">
    <location>
        <begin position="276"/>
        <end position="296"/>
    </location>
</feature>
<feature type="topological domain" description="Cytoplasmic" evidence="1">
    <location>
        <begin position="297"/>
        <end position="300"/>
    </location>
</feature>
<feature type="active site" evidence="1">
    <location>
        <position position="60"/>
    </location>
</feature>
<feature type="binding site" description="axial binding residue" evidence="1">
    <location>
        <position position="63"/>
    </location>
    <ligand>
        <name>heme o</name>
        <dbReference type="ChEBI" id="CHEBI:24480"/>
    </ligand>
    <ligandPart>
        <name>Fe</name>
        <dbReference type="ChEBI" id="CHEBI:18248"/>
    </ligandPart>
</feature>
<feature type="binding site" description="axial binding residue" evidence="1">
    <location>
        <position position="125"/>
    </location>
    <ligand>
        <name>heme o</name>
        <dbReference type="ChEBI" id="CHEBI:24480"/>
    </ligand>
    <ligandPart>
        <name>Fe</name>
        <dbReference type="ChEBI" id="CHEBI:18248"/>
    </ligandPart>
</feature>
<feature type="binding site" description="axial binding residue" evidence="1">
    <location>
        <position position="216"/>
    </location>
    <ligand>
        <name>heme b</name>
        <dbReference type="ChEBI" id="CHEBI:60344"/>
    </ligand>
    <ligandPart>
        <name>Fe</name>
        <dbReference type="ChEBI" id="CHEBI:18248"/>
    </ligandPart>
</feature>
<feature type="binding site" description="axial binding residue" evidence="1">
    <location>
        <position position="278"/>
    </location>
    <ligand>
        <name>heme b</name>
        <dbReference type="ChEBI" id="CHEBI:60344"/>
    </ligand>
    <ligandPart>
        <name>Fe</name>
        <dbReference type="ChEBI" id="CHEBI:18248"/>
    </ligandPart>
</feature>
<feature type="disulfide bond" description="Essential for catalytic activity" evidence="1">
    <location>
        <begin position="37"/>
        <end position="44"/>
    </location>
</feature>
<feature type="disulfide bond" evidence="1">
    <location>
        <begin position="191"/>
        <end position="197"/>
    </location>
</feature>
<proteinExistence type="inferred from homology"/>
<accession>B9EB26</accession>
<organism>
    <name type="scientific">Macrococcus caseolyticus (strain JCSC5402)</name>
    <name type="common">Macrococcoides caseolyticum</name>
    <dbReference type="NCBI Taxonomy" id="458233"/>
    <lineage>
        <taxon>Bacteria</taxon>
        <taxon>Bacillati</taxon>
        <taxon>Bacillota</taxon>
        <taxon>Bacilli</taxon>
        <taxon>Bacillales</taxon>
        <taxon>Staphylococcaceae</taxon>
        <taxon>Macrococcoides</taxon>
    </lineage>
</organism>
<gene>
    <name evidence="1" type="primary">ctaA</name>
    <name type="ordered locus">MCCL_0730</name>
</gene>
<sequence>MLKEKNLKWLSLFTTVLMLFVQIGGALVTKTGSADGCGSSWPLCHGKFVPTHIPKETLIELAHRGVSGLALLSVTWLVILSIKYIGHKKETKFLCYMSIGFIFAQALIGAAAVMWQQNGFVLALHFGISLISFSAVFLLTLLIFEVDQKFDATKLILQPKLRRHTIGLTSFIYFVIYSGALVRHEKASLACSSWPLCRKGAFILPQNFYEWVQMSHRTLAFILFIWLTYVAFHAMRNYAQYRVIKYGYMIAFILICLQVTTGALTIFTAVNLYIALLHALFITLLFGLLCYFILLISRAK</sequence>
<dbReference type="EC" id="1.17.99.9" evidence="1"/>
<dbReference type="EMBL" id="AP009484">
    <property type="protein sequence ID" value="BAH17437.1"/>
    <property type="molecule type" value="Genomic_DNA"/>
</dbReference>
<dbReference type="RefSeq" id="WP_012656638.1">
    <property type="nucleotide sequence ID" value="NC_011999.1"/>
</dbReference>
<dbReference type="SMR" id="B9EB26"/>
<dbReference type="STRING" id="458233.MCCL_0730"/>
<dbReference type="GeneID" id="61129374"/>
<dbReference type="KEGG" id="mcl:MCCL_0730"/>
<dbReference type="eggNOG" id="COG1612">
    <property type="taxonomic scope" value="Bacteria"/>
</dbReference>
<dbReference type="HOGENOM" id="CLU_041525_3_1_9"/>
<dbReference type="OrthoDB" id="9816428at2"/>
<dbReference type="UniPathway" id="UPA00269">
    <property type="reaction ID" value="UER00713"/>
</dbReference>
<dbReference type="Proteomes" id="UP000001383">
    <property type="component" value="Chromosome"/>
</dbReference>
<dbReference type="GO" id="GO:0005886">
    <property type="term" value="C:plasma membrane"/>
    <property type="evidence" value="ECO:0007669"/>
    <property type="project" value="UniProtKB-SubCell"/>
</dbReference>
<dbReference type="GO" id="GO:0046872">
    <property type="term" value="F:metal ion binding"/>
    <property type="evidence" value="ECO:0007669"/>
    <property type="project" value="UniProtKB-KW"/>
</dbReference>
<dbReference type="GO" id="GO:0016653">
    <property type="term" value="F:oxidoreductase activity, acting on NAD(P)H, heme protein as acceptor"/>
    <property type="evidence" value="ECO:0007669"/>
    <property type="project" value="InterPro"/>
</dbReference>
<dbReference type="GO" id="GO:0006784">
    <property type="term" value="P:heme A biosynthetic process"/>
    <property type="evidence" value="ECO:0007669"/>
    <property type="project" value="UniProtKB-UniRule"/>
</dbReference>
<dbReference type="HAMAP" id="MF_01664">
    <property type="entry name" value="HemeA_synth_type1"/>
    <property type="match status" value="1"/>
</dbReference>
<dbReference type="InterPro" id="IPR003780">
    <property type="entry name" value="COX15/CtaA_fam"/>
</dbReference>
<dbReference type="InterPro" id="IPR050450">
    <property type="entry name" value="COX15/CtaA_HemeA_synthase"/>
</dbReference>
<dbReference type="InterPro" id="IPR023755">
    <property type="entry name" value="HemeA_Synthase_type1"/>
</dbReference>
<dbReference type="PANTHER" id="PTHR35457">
    <property type="entry name" value="HEME A SYNTHASE"/>
    <property type="match status" value="1"/>
</dbReference>
<dbReference type="PANTHER" id="PTHR35457:SF1">
    <property type="entry name" value="HEME A SYNTHASE"/>
    <property type="match status" value="1"/>
</dbReference>
<dbReference type="Pfam" id="PF02628">
    <property type="entry name" value="COX15-CtaA"/>
    <property type="match status" value="1"/>
</dbReference>